<dbReference type="EC" id="1.1.1.8"/>
<dbReference type="EMBL" id="AY289714">
    <property type="protein sequence ID" value="AAP44106.1"/>
    <property type="molecule type" value="Genomic_DNA"/>
</dbReference>
<dbReference type="SMR" id="Q7ZA43"/>
<dbReference type="PhylomeDB" id="Q7ZA43"/>
<dbReference type="GO" id="GO:0005829">
    <property type="term" value="C:cytosol"/>
    <property type="evidence" value="ECO:0007669"/>
    <property type="project" value="TreeGrafter"/>
</dbReference>
<dbReference type="GO" id="GO:0005634">
    <property type="term" value="C:nucleus"/>
    <property type="evidence" value="ECO:0007669"/>
    <property type="project" value="TreeGrafter"/>
</dbReference>
<dbReference type="GO" id="GO:0141152">
    <property type="term" value="F:glycerol-3-phosphate dehydrogenase (NAD+) activity"/>
    <property type="evidence" value="ECO:0007669"/>
    <property type="project" value="UniProtKB-EC"/>
</dbReference>
<dbReference type="GO" id="GO:0051287">
    <property type="term" value="F:NAD binding"/>
    <property type="evidence" value="ECO:0007669"/>
    <property type="project" value="InterPro"/>
</dbReference>
<dbReference type="GO" id="GO:0042803">
    <property type="term" value="F:protein homodimerization activity"/>
    <property type="evidence" value="ECO:0007669"/>
    <property type="project" value="InterPro"/>
</dbReference>
<dbReference type="GO" id="GO:0005975">
    <property type="term" value="P:carbohydrate metabolic process"/>
    <property type="evidence" value="ECO:0007669"/>
    <property type="project" value="InterPro"/>
</dbReference>
<dbReference type="GO" id="GO:0046168">
    <property type="term" value="P:glycerol-3-phosphate catabolic process"/>
    <property type="evidence" value="ECO:0007669"/>
    <property type="project" value="InterPro"/>
</dbReference>
<dbReference type="FunFam" id="1.10.1040.10:FF:000004">
    <property type="entry name" value="Glycerol-3-phosphate dehydrogenase [NAD(+)]"/>
    <property type="match status" value="1"/>
</dbReference>
<dbReference type="FunFam" id="3.40.50.720:FF:000294">
    <property type="entry name" value="Glycerol-3-phosphate dehydrogenase [NAD(+)]"/>
    <property type="match status" value="1"/>
</dbReference>
<dbReference type="Gene3D" id="1.10.1040.10">
    <property type="entry name" value="N-(1-d-carboxylethyl)-l-norvaline Dehydrogenase, domain 2"/>
    <property type="match status" value="1"/>
</dbReference>
<dbReference type="Gene3D" id="3.40.50.720">
    <property type="entry name" value="NAD(P)-binding Rossmann-like Domain"/>
    <property type="match status" value="1"/>
</dbReference>
<dbReference type="InterPro" id="IPR008927">
    <property type="entry name" value="6-PGluconate_DH-like_C_sf"/>
</dbReference>
<dbReference type="InterPro" id="IPR013328">
    <property type="entry name" value="6PGD_dom2"/>
</dbReference>
<dbReference type="InterPro" id="IPR006168">
    <property type="entry name" value="G3P_DH_NAD-dep"/>
</dbReference>
<dbReference type="InterPro" id="IPR006109">
    <property type="entry name" value="G3P_DH_NAD-dep_C"/>
</dbReference>
<dbReference type="InterPro" id="IPR017751">
    <property type="entry name" value="G3P_DH_NAD-dep_euk"/>
</dbReference>
<dbReference type="InterPro" id="IPR011128">
    <property type="entry name" value="G3P_DH_NAD-dep_N"/>
</dbReference>
<dbReference type="InterPro" id="IPR036291">
    <property type="entry name" value="NAD(P)-bd_dom_sf"/>
</dbReference>
<dbReference type="NCBIfam" id="TIGR03376">
    <property type="entry name" value="glycerol3P_DH"/>
    <property type="match status" value="1"/>
</dbReference>
<dbReference type="PANTHER" id="PTHR11728">
    <property type="entry name" value="GLYCEROL-3-PHOSPHATE DEHYDROGENASE"/>
    <property type="match status" value="1"/>
</dbReference>
<dbReference type="PANTHER" id="PTHR11728:SF8">
    <property type="entry name" value="GLYCEROL-3-PHOSPHATE DEHYDROGENASE [NAD(+)]-RELATED"/>
    <property type="match status" value="1"/>
</dbReference>
<dbReference type="Pfam" id="PF07479">
    <property type="entry name" value="NAD_Gly3P_dh_C"/>
    <property type="match status" value="1"/>
</dbReference>
<dbReference type="Pfam" id="PF01210">
    <property type="entry name" value="NAD_Gly3P_dh_N"/>
    <property type="match status" value="1"/>
</dbReference>
<dbReference type="PIRSF" id="PIRSF000114">
    <property type="entry name" value="Glycerol-3-P_dh"/>
    <property type="match status" value="1"/>
</dbReference>
<dbReference type="PRINTS" id="PR00077">
    <property type="entry name" value="GPDHDRGNASE"/>
</dbReference>
<dbReference type="SUPFAM" id="SSF48179">
    <property type="entry name" value="6-phosphogluconate dehydrogenase C-terminal domain-like"/>
    <property type="match status" value="1"/>
</dbReference>
<dbReference type="SUPFAM" id="SSF51735">
    <property type="entry name" value="NAD(P)-binding Rossmann-fold domains"/>
    <property type="match status" value="1"/>
</dbReference>
<dbReference type="PROSITE" id="PS00957">
    <property type="entry name" value="NAD_G3PDH"/>
    <property type="match status" value="1"/>
</dbReference>
<comment type="catalytic activity">
    <reaction>
        <text>sn-glycerol 3-phosphate + NAD(+) = dihydroxyacetone phosphate + NADH + H(+)</text>
        <dbReference type="Rhea" id="RHEA:11092"/>
        <dbReference type="ChEBI" id="CHEBI:15378"/>
        <dbReference type="ChEBI" id="CHEBI:57540"/>
        <dbReference type="ChEBI" id="CHEBI:57597"/>
        <dbReference type="ChEBI" id="CHEBI:57642"/>
        <dbReference type="ChEBI" id="CHEBI:57945"/>
        <dbReference type="EC" id="1.1.1.8"/>
    </reaction>
</comment>
<comment type="similarity">
    <text evidence="3">Belongs to the NAD-dependent glycerol-3-phosphate dehydrogenase family.</text>
</comment>
<organism>
    <name type="scientific">Pichia angusta</name>
    <name type="common">Yeast</name>
    <name type="synonym">Hansenula polymorpha</name>
    <dbReference type="NCBI Taxonomy" id="870730"/>
    <lineage>
        <taxon>Eukaryota</taxon>
        <taxon>Fungi</taxon>
        <taxon>Dikarya</taxon>
        <taxon>Ascomycota</taxon>
        <taxon>Saccharomycotina</taxon>
        <taxon>Pichiomycetes</taxon>
        <taxon>Pichiales</taxon>
        <taxon>Pichiaceae</taxon>
        <taxon>Ogataea</taxon>
    </lineage>
</organism>
<reference key="1">
    <citation type="journal article" date="2004" name="FEMS Yeast Res.">
        <title>Yeast orthologues associated with glycerol transport and metabolism.</title>
        <authorList>
            <person name="Neves L."/>
            <person name="Oliveira R."/>
            <person name="Lucas C."/>
        </authorList>
    </citation>
    <scope>NUCLEOTIDE SEQUENCE [GENOMIC DNA]</scope>
    <source>
        <strain>IGc4129</strain>
    </source>
</reference>
<proteinExistence type="inferred from homology"/>
<name>GPD_PICAN</name>
<gene>
    <name type="primary">GPD</name>
</gene>
<protein>
    <recommendedName>
        <fullName>Glycerol-3-phosphate dehydrogenase [NAD(+)]</fullName>
        <ecNumber>1.1.1.8</ecNumber>
    </recommendedName>
</protein>
<feature type="chain" id="PRO_0000138092" description="Glycerol-3-phosphate dehydrogenase [NAD(+)]">
    <location>
        <begin position="1"/>
        <end position="381"/>
    </location>
</feature>
<feature type="region of interest" description="Disordered" evidence="2">
    <location>
        <begin position="1"/>
        <end position="27"/>
    </location>
</feature>
<feature type="active site" description="Proton acceptor" evidence="1">
    <location>
        <position position="238"/>
    </location>
</feature>
<feature type="binding site" evidence="1">
    <location>
        <begin position="34"/>
        <end position="39"/>
    </location>
    <ligand>
        <name>NAD(+)</name>
        <dbReference type="ChEBI" id="CHEBI:57540"/>
    </ligand>
</feature>
<feature type="binding site" evidence="1">
    <location>
        <position position="66"/>
    </location>
    <ligand>
        <name>NAD(+)</name>
        <dbReference type="ChEBI" id="CHEBI:57540"/>
    </ligand>
</feature>
<feature type="binding site" evidence="1">
    <location>
        <position position="122"/>
    </location>
    <ligand>
        <name>NAD(+)</name>
        <dbReference type="ChEBI" id="CHEBI:57540"/>
    </ligand>
</feature>
<feature type="binding site" evidence="1">
    <location>
        <position position="145"/>
    </location>
    <ligand>
        <name>substrate</name>
    </ligand>
</feature>
<feature type="binding site" evidence="1">
    <location>
        <position position="178"/>
    </location>
    <ligand>
        <name>NAD(+)</name>
        <dbReference type="ChEBI" id="CHEBI:57540"/>
    </ligand>
</feature>
<feature type="binding site" evidence="1">
    <location>
        <begin position="303"/>
        <end position="304"/>
    </location>
    <ligand>
        <name>substrate</name>
    </ligand>
</feature>
<feature type="binding site" evidence="1">
    <location>
        <position position="303"/>
    </location>
    <ligand>
        <name>NAD(+)</name>
        <dbReference type="ChEBI" id="CHEBI:57540"/>
    </ligand>
</feature>
<feature type="binding site" evidence="1">
    <location>
        <position position="332"/>
    </location>
    <ligand>
        <name>NAD(+)</name>
        <dbReference type="ChEBI" id="CHEBI:57540"/>
    </ligand>
</feature>
<sequence>MTAMDRLDHVSNQLAAKRQKKNPEGKPFRITVVGSGNWGSTIAKVVAENAKELPEEFHQIVKMWVFEEEVDGRKLTEIINTDHENVKYLPDVKLPDNIVAIPDIVDACADADIIIFNIPHQFLPKILAQLKGKVNPKARAISCLKGLEVTKDGCKLLSNYITEELGIYCGALSGANLAPEVARQKWSETTVAYRIPQDFRGEGKDVDQSVIRNLFHRPYFHVRVIDDVAGVSLSGALKNVIAMAAGFVEGLGWGDNAKSAVMRIGLVEMIKFAHMFFEDCQSTTFTHESAGVADIITTCAGGRNVRVGRYMAEHKVSGFEAEKVLLNGQSCQGLHTTREVYELLAAKNVIDEFPLFKATYQIIYEGLPMEKLPELLEASED</sequence>
<evidence type="ECO:0000250" key="1">
    <source>
        <dbReference type="UniProtKB" id="P21695"/>
    </source>
</evidence>
<evidence type="ECO:0000256" key="2">
    <source>
        <dbReference type="SAM" id="MobiDB-lite"/>
    </source>
</evidence>
<evidence type="ECO:0000305" key="3"/>
<keyword id="KW-0520">NAD</keyword>
<keyword id="KW-0560">Oxidoreductase</keyword>
<accession>Q7ZA43</accession>